<gene>
    <name type="primary">trz1</name>
    <name type="ORF">SPAC1D4.10</name>
</gene>
<reference key="1">
    <citation type="journal article" date="2002" name="Nature">
        <title>The genome sequence of Schizosaccharomyces pombe.</title>
        <authorList>
            <person name="Wood V."/>
            <person name="Gwilliam R."/>
            <person name="Rajandream M.A."/>
            <person name="Lyne M.H."/>
            <person name="Lyne R."/>
            <person name="Stewart A."/>
            <person name="Sgouros J.G."/>
            <person name="Peat N."/>
            <person name="Hayles J."/>
            <person name="Baker S.G."/>
            <person name="Basham D."/>
            <person name="Bowman S."/>
            <person name="Brooks K."/>
            <person name="Brown D."/>
            <person name="Brown S."/>
            <person name="Chillingworth T."/>
            <person name="Churcher C.M."/>
            <person name="Collins M."/>
            <person name="Connor R."/>
            <person name="Cronin A."/>
            <person name="Davis P."/>
            <person name="Feltwell T."/>
            <person name="Fraser A."/>
            <person name="Gentles S."/>
            <person name="Goble A."/>
            <person name="Hamlin N."/>
            <person name="Harris D.E."/>
            <person name="Hidalgo J."/>
            <person name="Hodgson G."/>
            <person name="Holroyd S."/>
            <person name="Hornsby T."/>
            <person name="Howarth S."/>
            <person name="Huckle E.J."/>
            <person name="Hunt S."/>
            <person name="Jagels K."/>
            <person name="James K.D."/>
            <person name="Jones L."/>
            <person name="Jones M."/>
            <person name="Leather S."/>
            <person name="McDonald S."/>
            <person name="McLean J."/>
            <person name="Mooney P."/>
            <person name="Moule S."/>
            <person name="Mungall K.L."/>
            <person name="Murphy L.D."/>
            <person name="Niblett D."/>
            <person name="Odell C."/>
            <person name="Oliver K."/>
            <person name="O'Neil S."/>
            <person name="Pearson D."/>
            <person name="Quail M.A."/>
            <person name="Rabbinowitsch E."/>
            <person name="Rutherford K.M."/>
            <person name="Rutter S."/>
            <person name="Saunders D."/>
            <person name="Seeger K."/>
            <person name="Sharp S."/>
            <person name="Skelton J."/>
            <person name="Simmonds M.N."/>
            <person name="Squares R."/>
            <person name="Squares S."/>
            <person name="Stevens K."/>
            <person name="Taylor K."/>
            <person name="Taylor R.G."/>
            <person name="Tivey A."/>
            <person name="Walsh S.V."/>
            <person name="Warren T."/>
            <person name="Whitehead S."/>
            <person name="Woodward J.R."/>
            <person name="Volckaert G."/>
            <person name="Aert R."/>
            <person name="Robben J."/>
            <person name="Grymonprez B."/>
            <person name="Weltjens I."/>
            <person name="Vanstreels E."/>
            <person name="Rieger M."/>
            <person name="Schaefer M."/>
            <person name="Mueller-Auer S."/>
            <person name="Gabel C."/>
            <person name="Fuchs M."/>
            <person name="Duesterhoeft A."/>
            <person name="Fritzc C."/>
            <person name="Holzer E."/>
            <person name="Moestl D."/>
            <person name="Hilbert H."/>
            <person name="Borzym K."/>
            <person name="Langer I."/>
            <person name="Beck A."/>
            <person name="Lehrach H."/>
            <person name="Reinhardt R."/>
            <person name="Pohl T.M."/>
            <person name="Eger P."/>
            <person name="Zimmermann W."/>
            <person name="Wedler H."/>
            <person name="Wambutt R."/>
            <person name="Purnelle B."/>
            <person name="Goffeau A."/>
            <person name="Cadieu E."/>
            <person name="Dreano S."/>
            <person name="Gloux S."/>
            <person name="Lelaure V."/>
            <person name="Mottier S."/>
            <person name="Galibert F."/>
            <person name="Aves S.J."/>
            <person name="Xiang Z."/>
            <person name="Hunt C."/>
            <person name="Moore K."/>
            <person name="Hurst S.M."/>
            <person name="Lucas M."/>
            <person name="Rochet M."/>
            <person name="Gaillardin C."/>
            <person name="Tallada V.A."/>
            <person name="Garzon A."/>
            <person name="Thode G."/>
            <person name="Daga R.R."/>
            <person name="Cruzado L."/>
            <person name="Jimenez J."/>
            <person name="Sanchez M."/>
            <person name="del Rey F."/>
            <person name="Benito J."/>
            <person name="Dominguez A."/>
            <person name="Revuelta J.L."/>
            <person name="Moreno S."/>
            <person name="Armstrong J."/>
            <person name="Forsburg S.L."/>
            <person name="Cerutti L."/>
            <person name="Lowe T."/>
            <person name="McCombie W.R."/>
            <person name="Paulsen I."/>
            <person name="Potashkin J."/>
            <person name="Shpakovski G.V."/>
            <person name="Ussery D."/>
            <person name="Barrell B.G."/>
            <person name="Nurse P."/>
        </authorList>
    </citation>
    <scope>NUCLEOTIDE SEQUENCE [LARGE SCALE GENOMIC DNA]</scope>
    <source>
        <strain>972 / ATCC 24843</strain>
    </source>
</reference>
<reference key="2">
    <citation type="journal article" date="2006" name="Nat. Biotechnol.">
        <title>ORFeome cloning and global analysis of protein localization in the fission yeast Schizosaccharomyces pombe.</title>
        <authorList>
            <person name="Matsuyama A."/>
            <person name="Arai R."/>
            <person name="Yashiroda Y."/>
            <person name="Shirai A."/>
            <person name="Kamata A."/>
            <person name="Sekido S."/>
            <person name="Kobayashi Y."/>
            <person name="Hashimoto A."/>
            <person name="Hamamoto M."/>
            <person name="Hiraoka Y."/>
            <person name="Horinouchi S."/>
            <person name="Yoshida M."/>
        </authorList>
    </citation>
    <scope>SUBCELLULAR LOCATION [LARGE SCALE ANALYSIS]</scope>
</reference>
<reference key="3">
    <citation type="journal article" date="2011" name="Biochem. J.">
        <title>The fission yeast Schizosaccharomyces pombe has two distinct tRNase Z(L)s encoded by two different genes and differentially targeted to the nucleus and mitochondria.</title>
        <authorList>
            <person name="Gan X."/>
            <person name="Yang J."/>
            <person name="Li J."/>
            <person name="Yu H."/>
            <person name="Dai H."/>
            <person name="Liu J."/>
            <person name="Huang Y."/>
        </authorList>
    </citation>
    <scope>FUNCTION</scope>
    <scope>SUBCELLULAR LOCATION</scope>
</reference>
<evidence type="ECO:0000256" key="1">
    <source>
        <dbReference type="SAM" id="MobiDB-lite"/>
    </source>
</evidence>
<evidence type="ECO:0000269" key="2">
    <source>
    </source>
</evidence>
<evidence type="ECO:0000269" key="3">
    <source>
    </source>
</evidence>
<evidence type="ECO:0000305" key="4"/>
<protein>
    <recommendedName>
        <fullName>Ribonuclease Z 1</fullName>
        <shortName>RNase Z 1</shortName>
        <ecNumber>3.1.26.11</ecNumber>
    </recommendedName>
    <alternativeName>
        <fullName>tRNA 3 endonuclease 1</fullName>
    </alternativeName>
    <alternativeName>
        <fullName>tRNase Z 1</fullName>
    </alternativeName>
</protein>
<sequence>MSKTVNFRATKNFYLQFVSVSSRDTSCIPCIHLFFDSKRYVFGSVGEGCQRAILSQQLRLSKIKDVFLMQGSSISSPDTYDSSSSSSTTSVSDMLQLDDRDKVIVSERNSMCSTVNYPTWWDSCGGFPGFLLSLNDISEPGETGEASPFVLHGPSEVHQFLSSMRHFTYHTNVNLTVQGYTSAEAPVFVDENICVTPVVVSLVKNSFKKRKHENINRGTNARPLKEDRANTSPHWYSHVSNDTSFVVENAMYNTPAPLEPDKPELFISYIVQSHPTPGKFDAAKAKSLGITKGLDCGRLARGEPVTLENGKTVYPKEVIGPSIPGSSFFIIHCPNELVIDLVIENHKWTNAPKPVCVIHSVTPEVYKNPRYQSWISSFPSEVSHLIASTEVNEVINYPRSAVAIATLNLLDSKVFPLGFNCYEVKNVQKNNRIAFAKPKLRFAFGKKTGIDDSEVGVSIEELKDKILKEKPDYKSFVEEAQKYVSDKPKAPSFAGSDIQICTLGTGSAMPSLYRNVSSTYVRIPVDKKCMEDSAISMKNILLDCGEGTLGRLSRQYGDNLKYEIASLRWIYISHMHADHHAGVIGVLKAWTKYSDGRSKLFITAPPQFEFWLLEYSRIDYLPLSNIVFISNSALRTDRKPSALESSRLSSLFKEFDLVSFRTVPAIHCPYSYCMEITNSSGWKIAYSGDTRPSEDFANIAKDSTLLIHEATLEDSMHEIAIKKQHSTYSEALEVAKKAGTKNVILTHFSQRYPKLPDIDISTEDLHIALAFDGMTLKISDISLFRYFGKPLAYLFNEENLKEESDPLKF</sequence>
<comment type="function">
    <text evidence="3">Zinc phosphodiesterase, which displays some tRNA 3'-processing endonuclease activity. May be involved in tRNA maturation, by removing a 3'-trailer from precursor tRNA.</text>
</comment>
<comment type="catalytic activity">
    <reaction>
        <text>Endonucleolytic cleavage of RNA, removing extra 3' nucleotides from tRNA precursor, generating 3' termini of tRNAs. A 3'-hydroxy group is left at the tRNA terminus and a 5'-phosphoryl group is left at the trailer molecule.</text>
        <dbReference type="EC" id="3.1.26.11"/>
    </reaction>
</comment>
<comment type="cofactor">
    <cofactor evidence="4">
        <name>Zn(2+)</name>
        <dbReference type="ChEBI" id="CHEBI:29105"/>
    </cofactor>
</comment>
<comment type="subcellular location">
    <subcellularLocation>
        <location evidence="2 3">Nucleus</location>
    </subcellularLocation>
    <subcellularLocation>
        <location>Cytoplasm</location>
    </subcellularLocation>
</comment>
<comment type="similarity">
    <text evidence="4">Belongs to the RNase Z family.</text>
</comment>
<dbReference type="EC" id="3.1.26.11"/>
<dbReference type="EMBL" id="CU329670">
    <property type="protein sequence ID" value="CAA93219.1"/>
    <property type="molecule type" value="Genomic_DNA"/>
</dbReference>
<dbReference type="PIR" id="T38051">
    <property type="entry name" value="T38051"/>
</dbReference>
<dbReference type="RefSeq" id="NP_593023.1">
    <property type="nucleotide sequence ID" value="NM_001018422.2"/>
</dbReference>
<dbReference type="SMR" id="Q10155"/>
<dbReference type="FunCoup" id="Q10155">
    <property type="interactions" value="633"/>
</dbReference>
<dbReference type="STRING" id="284812.Q10155"/>
<dbReference type="iPTMnet" id="Q10155"/>
<dbReference type="PaxDb" id="4896-SPAC1D4.10.1"/>
<dbReference type="EnsemblFungi" id="SPAC1D4.10.1">
    <property type="protein sequence ID" value="SPAC1D4.10.1:pep"/>
    <property type="gene ID" value="SPAC1D4.10"/>
</dbReference>
<dbReference type="GeneID" id="2542457"/>
<dbReference type="KEGG" id="spo:2542457"/>
<dbReference type="PomBase" id="SPAC1D4.10">
    <property type="gene designation" value="trz1"/>
</dbReference>
<dbReference type="VEuPathDB" id="FungiDB:SPAC1D4.10"/>
<dbReference type="eggNOG" id="KOG2121">
    <property type="taxonomic scope" value="Eukaryota"/>
</dbReference>
<dbReference type="HOGENOM" id="CLU_006220_0_0_1"/>
<dbReference type="InParanoid" id="Q10155"/>
<dbReference type="OMA" id="INYICQL"/>
<dbReference type="PhylomeDB" id="Q10155"/>
<dbReference type="BRENDA" id="3.1.26.11">
    <property type="organism ID" value="5613"/>
</dbReference>
<dbReference type="PRO" id="PR:Q10155"/>
<dbReference type="Proteomes" id="UP000002485">
    <property type="component" value="Chromosome I"/>
</dbReference>
<dbReference type="GO" id="GO:0005737">
    <property type="term" value="C:cytoplasm"/>
    <property type="evidence" value="ECO:0007669"/>
    <property type="project" value="UniProtKB-SubCell"/>
</dbReference>
<dbReference type="GO" id="GO:0005634">
    <property type="term" value="C:nucleus"/>
    <property type="evidence" value="ECO:0000314"/>
    <property type="project" value="PomBase"/>
</dbReference>
<dbReference type="GO" id="GO:0042781">
    <property type="term" value="F:3'-tRNA processing endoribonuclease activity"/>
    <property type="evidence" value="ECO:0000314"/>
    <property type="project" value="PomBase"/>
</dbReference>
<dbReference type="GO" id="GO:0046872">
    <property type="term" value="F:metal ion binding"/>
    <property type="evidence" value="ECO:0007669"/>
    <property type="project" value="UniProtKB-KW"/>
</dbReference>
<dbReference type="GO" id="GO:0042780">
    <property type="term" value="P:tRNA 3'-end processing"/>
    <property type="evidence" value="ECO:0000315"/>
    <property type="project" value="PomBase"/>
</dbReference>
<dbReference type="CDD" id="cd07718">
    <property type="entry name" value="RNaseZ_ELAC1_ELAC2-C-term-like_MBL-fold"/>
    <property type="match status" value="1"/>
</dbReference>
<dbReference type="Gene3D" id="3.60.15.10">
    <property type="entry name" value="Ribonuclease Z/Hydroxyacylglutathione hydrolase-like"/>
    <property type="match status" value="2"/>
</dbReference>
<dbReference type="InterPro" id="IPR036866">
    <property type="entry name" value="RibonucZ/Hydroxyglut_hydro"/>
</dbReference>
<dbReference type="InterPro" id="IPR047151">
    <property type="entry name" value="RNZ2-like"/>
</dbReference>
<dbReference type="InterPro" id="IPR027794">
    <property type="entry name" value="tRNase_Z_dom"/>
</dbReference>
<dbReference type="PANTHER" id="PTHR12553:SF73">
    <property type="entry name" value="RIBONUCLEASE Z 1"/>
    <property type="match status" value="1"/>
</dbReference>
<dbReference type="PANTHER" id="PTHR12553">
    <property type="entry name" value="ZINC PHOSPHODIESTERASE ELAC PROTEIN 2"/>
    <property type="match status" value="1"/>
</dbReference>
<dbReference type="Pfam" id="PF13691">
    <property type="entry name" value="Lactamase_B_4"/>
    <property type="match status" value="1"/>
</dbReference>
<dbReference type="SUPFAM" id="SSF56281">
    <property type="entry name" value="Metallo-hydrolase/oxidoreductase"/>
    <property type="match status" value="2"/>
</dbReference>
<accession>Q10155</accession>
<keyword id="KW-0963">Cytoplasm</keyword>
<keyword id="KW-0255">Endonuclease</keyword>
<keyword id="KW-0378">Hydrolase</keyword>
<keyword id="KW-0479">Metal-binding</keyword>
<keyword id="KW-0540">Nuclease</keyword>
<keyword id="KW-0539">Nucleus</keyword>
<keyword id="KW-1185">Reference proteome</keyword>
<keyword id="KW-0819">tRNA processing</keyword>
<keyword id="KW-0862">Zinc</keyword>
<feature type="chain" id="PRO_0000155836" description="Ribonuclease Z 1">
    <location>
        <begin position="1"/>
        <end position="809"/>
    </location>
</feature>
<feature type="region of interest" description="Disordered" evidence="1">
    <location>
        <begin position="74"/>
        <end position="93"/>
    </location>
</feature>
<name>RNZ1_SCHPO</name>
<proteinExistence type="inferred from homology"/>
<organism>
    <name type="scientific">Schizosaccharomyces pombe (strain 972 / ATCC 24843)</name>
    <name type="common">Fission yeast</name>
    <dbReference type="NCBI Taxonomy" id="284812"/>
    <lineage>
        <taxon>Eukaryota</taxon>
        <taxon>Fungi</taxon>
        <taxon>Dikarya</taxon>
        <taxon>Ascomycota</taxon>
        <taxon>Taphrinomycotina</taxon>
        <taxon>Schizosaccharomycetes</taxon>
        <taxon>Schizosaccharomycetales</taxon>
        <taxon>Schizosaccharomycetaceae</taxon>
        <taxon>Schizosaccharomyces</taxon>
    </lineage>
</organism>